<reference key="1">
    <citation type="journal article" date="1997" name="Microbiology">
        <title>Alanyl-tRNA synthetase gene of the extreme acidophilic chemolithoautotrophic Thiobacillus ferrooxidans is highly homologous to alaS genes from all living kingdoms but cannot be transcribed from its promoter in Escherichia coli.</title>
        <authorList>
            <person name="Guiliani N."/>
            <person name="Bengrine A."/>
            <person name="Borne F."/>
            <person name="Chippaux M."/>
            <person name="Bonnefoy V."/>
        </authorList>
    </citation>
    <scope>NUCLEOTIDE SEQUENCE [GENOMIC DNA]</scope>
    <source>
        <strain>ATCC 33020 / DSM 29468 / JCM 18981 / 11Fe</strain>
    </source>
</reference>
<reference key="2">
    <citation type="journal article" date="1994" name="Nucleic Acids Res.">
        <title>A putative regulatory gene downstream of recA is conserved in Gram-negative and Gram-positive bacteria.</title>
        <authorList>
            <person name="de Mot R."/>
            <person name="Schoofs G."/>
            <person name="Vanderleyden J."/>
        </authorList>
    </citation>
    <scope>IDENTIFICATION</scope>
</reference>
<evidence type="ECO:0000250" key="1"/>
<evidence type="ECO:0000305" key="2"/>
<gene>
    <name type="primary">recX</name>
</gene>
<dbReference type="EMBL" id="X95571">
    <property type="protein sequence ID" value="CAA64817.1"/>
    <property type="molecule type" value="Genomic_DNA"/>
</dbReference>
<dbReference type="SMR" id="P37866"/>
<dbReference type="GO" id="GO:0005737">
    <property type="term" value="C:cytoplasm"/>
    <property type="evidence" value="ECO:0007669"/>
    <property type="project" value="UniProtKB-SubCell"/>
</dbReference>
<dbReference type="Gene3D" id="1.10.10.10">
    <property type="entry name" value="Winged helix-like DNA-binding domain superfamily/Winged helix DNA-binding domain"/>
    <property type="match status" value="2"/>
</dbReference>
<dbReference type="InterPro" id="IPR053924">
    <property type="entry name" value="RecX_HTH_2nd"/>
</dbReference>
<dbReference type="InterPro" id="IPR053925">
    <property type="entry name" value="RecX_HTH_3rd"/>
</dbReference>
<dbReference type="InterPro" id="IPR036388">
    <property type="entry name" value="WH-like_DNA-bd_sf"/>
</dbReference>
<dbReference type="Pfam" id="PF02631">
    <property type="entry name" value="RecX_HTH2"/>
    <property type="match status" value="1"/>
</dbReference>
<dbReference type="Pfam" id="PF21981">
    <property type="entry name" value="RecX_HTH3"/>
    <property type="match status" value="1"/>
</dbReference>
<organism>
    <name type="scientific">Acidithiobacillus ferridurans</name>
    <dbReference type="NCBI Taxonomy" id="1232575"/>
    <lineage>
        <taxon>Bacteria</taxon>
        <taxon>Pseudomonadati</taxon>
        <taxon>Pseudomonadota</taxon>
        <taxon>Acidithiobacillia</taxon>
        <taxon>Acidithiobacillales</taxon>
        <taxon>Acidithiobacillaceae</taxon>
        <taxon>Acidithiobacillus</taxon>
    </lineage>
</organism>
<protein>
    <recommendedName>
        <fullName>Regulatory protein RecX</fullName>
    </recommendedName>
</protein>
<comment type="function">
    <text evidence="1">Modulates RecA activity.</text>
</comment>
<comment type="subcellular location">
    <subcellularLocation>
        <location evidence="2">Cytoplasm</location>
    </subcellularLocation>
</comment>
<comment type="similarity">
    <text evidence="2">Belongs to the RecX family.</text>
</comment>
<proteinExistence type="inferred from homology"/>
<sequence>MLTRTRVRQGHGPLRLRQDLQRAGVEATAALEIDWLQQAQAVCQKRFGDTPPTDARDYARRARFLAGRGFTGETIRRVLGAGRERDFSAD</sequence>
<name>RECX_ACIFI</name>
<keyword id="KW-0963">Cytoplasm</keyword>
<feature type="chain" id="PRO_0000162489" description="Regulatory protein RecX">
    <location>
        <begin position="1"/>
        <end position="90"/>
    </location>
</feature>
<accession>P37866</accession>
<accession>Q56272</accession>